<evidence type="ECO:0000255" key="1">
    <source>
        <dbReference type="HAMAP-Rule" id="MF_00022"/>
    </source>
</evidence>
<evidence type="ECO:0000256" key="2">
    <source>
        <dbReference type="SAM" id="MobiDB-lite"/>
    </source>
</evidence>
<accession>B2S5Z7</accession>
<comment type="function">
    <text evidence="1">Catalyzes the attachment of glutamate to tRNA(Glu) in a two-step reaction: glutamate is first activated by ATP to form Glu-AMP and then transferred to the acceptor end of tRNA(Glu).</text>
</comment>
<comment type="catalytic activity">
    <reaction evidence="1">
        <text>tRNA(Glu) + L-glutamate + ATP = L-glutamyl-tRNA(Glu) + AMP + diphosphate</text>
        <dbReference type="Rhea" id="RHEA:23540"/>
        <dbReference type="Rhea" id="RHEA-COMP:9663"/>
        <dbReference type="Rhea" id="RHEA-COMP:9680"/>
        <dbReference type="ChEBI" id="CHEBI:29985"/>
        <dbReference type="ChEBI" id="CHEBI:30616"/>
        <dbReference type="ChEBI" id="CHEBI:33019"/>
        <dbReference type="ChEBI" id="CHEBI:78442"/>
        <dbReference type="ChEBI" id="CHEBI:78520"/>
        <dbReference type="ChEBI" id="CHEBI:456215"/>
        <dbReference type="EC" id="6.1.1.17"/>
    </reaction>
</comment>
<comment type="subunit">
    <text evidence="1">Monomer.</text>
</comment>
<comment type="subcellular location">
    <subcellularLocation>
        <location evidence="1">Cytoplasm</location>
    </subcellularLocation>
</comment>
<comment type="similarity">
    <text evidence="1">Belongs to the class-I aminoacyl-tRNA synthetase family. Glutamate--tRNA ligase type 1 subfamily.</text>
</comment>
<protein>
    <recommendedName>
        <fullName evidence="1">Glutamate--tRNA ligase 2</fullName>
        <ecNumber evidence="1">6.1.1.17</ecNumber>
    </recommendedName>
    <alternativeName>
        <fullName evidence="1">Glutamyl-tRNA synthetase 2</fullName>
        <shortName evidence="1">GluRS 2</shortName>
    </alternativeName>
</protein>
<feature type="chain" id="PRO_0000367622" description="Glutamate--tRNA ligase 2">
    <location>
        <begin position="1"/>
        <end position="473"/>
    </location>
</feature>
<feature type="region of interest" description="Disordered" evidence="2">
    <location>
        <begin position="113"/>
        <end position="136"/>
    </location>
</feature>
<feature type="short sequence motif" description="'HIGH' region" evidence="1">
    <location>
        <begin position="11"/>
        <end position="21"/>
    </location>
</feature>
<feature type="short sequence motif" description="'KMSKS' region" evidence="1">
    <location>
        <begin position="240"/>
        <end position="244"/>
    </location>
</feature>
<feature type="compositionally biased region" description="Basic and acidic residues" evidence="2">
    <location>
        <begin position="113"/>
        <end position="133"/>
    </location>
</feature>
<feature type="binding site" evidence="1">
    <location>
        <position position="243"/>
    </location>
    <ligand>
        <name>ATP</name>
        <dbReference type="ChEBI" id="CHEBI:30616"/>
    </ligand>
</feature>
<gene>
    <name evidence="1" type="primary">gltX2</name>
    <name type="ordered locus">BAbS19_I10870</name>
</gene>
<organism>
    <name type="scientific">Brucella abortus (strain S19)</name>
    <dbReference type="NCBI Taxonomy" id="430066"/>
    <lineage>
        <taxon>Bacteria</taxon>
        <taxon>Pseudomonadati</taxon>
        <taxon>Pseudomonadota</taxon>
        <taxon>Alphaproteobacteria</taxon>
        <taxon>Hyphomicrobiales</taxon>
        <taxon>Brucellaceae</taxon>
        <taxon>Brucella/Ochrobactrum group</taxon>
        <taxon>Brucella</taxon>
    </lineage>
</organism>
<proteinExistence type="inferred from homology"/>
<sequence>MSKPVITRFAPSPTGYLHIGGARTALFNWLYAKHCGGKMLLRIEDTDRERSTEAATAAILDGLTWLGLDWDGEAISQFERAPRHREVAEELVANGKAYYCYASPEELEEMREKARAEGRPPRYDGRWRDRDPSEAPAGVKPVIRIKAPRDGETVVHDAVQGDVRFPNKDLDDFIILRSDGTPTYMHAVVVDDHDMGVTHIIRGDDHLTNAARQTIIYNAMGWDVPQMSHIPLIHGADGAKLSKRHGALGVDAYRAIGYLPAALRNYLVRLGWSHGDDEIMSTEQMIEWFDVKDINKGAARFDFQKLEAINGLYMRSSDDQALFDALVAVLPEIEGGKELAEALDDKGRAQLLLAMPGLKERAKTLVELADGAKFIFASRPLALDEKAASLLNDEGRAVLKPVYPVLEAVGEWTAESLDAAIRAHAEAEGLKLGKIAQPLRAALTGRATSPGVFDVLVVLGREESLARIGDQIG</sequence>
<keyword id="KW-0030">Aminoacyl-tRNA synthetase</keyword>
<keyword id="KW-0067">ATP-binding</keyword>
<keyword id="KW-0963">Cytoplasm</keyword>
<keyword id="KW-0436">Ligase</keyword>
<keyword id="KW-0547">Nucleotide-binding</keyword>
<keyword id="KW-0648">Protein biosynthesis</keyword>
<name>SYE2_BRUA1</name>
<reference key="1">
    <citation type="journal article" date="2008" name="PLoS ONE">
        <title>Genome sequence of Brucella abortus vaccine strain S19 compared to virulent strains yields candidate virulence genes.</title>
        <authorList>
            <person name="Crasta O.R."/>
            <person name="Folkerts O."/>
            <person name="Fei Z."/>
            <person name="Mane S.P."/>
            <person name="Evans C."/>
            <person name="Martino-Catt S."/>
            <person name="Bricker B."/>
            <person name="Yu G."/>
            <person name="Du L."/>
            <person name="Sobral B.W."/>
        </authorList>
    </citation>
    <scope>NUCLEOTIDE SEQUENCE [LARGE SCALE GENOMIC DNA]</scope>
    <source>
        <strain>S19</strain>
    </source>
</reference>
<dbReference type="EC" id="6.1.1.17" evidence="1"/>
<dbReference type="EMBL" id="CP000887">
    <property type="protein sequence ID" value="ACD72594.1"/>
    <property type="molecule type" value="Genomic_DNA"/>
</dbReference>
<dbReference type="SMR" id="B2S5Z7"/>
<dbReference type="KEGG" id="bmc:BAbS19_I10870"/>
<dbReference type="HOGENOM" id="CLU_015768_6_3_5"/>
<dbReference type="Proteomes" id="UP000002565">
    <property type="component" value="Chromosome 1"/>
</dbReference>
<dbReference type="GO" id="GO:0005829">
    <property type="term" value="C:cytosol"/>
    <property type="evidence" value="ECO:0007669"/>
    <property type="project" value="TreeGrafter"/>
</dbReference>
<dbReference type="GO" id="GO:0005524">
    <property type="term" value="F:ATP binding"/>
    <property type="evidence" value="ECO:0007669"/>
    <property type="project" value="UniProtKB-UniRule"/>
</dbReference>
<dbReference type="GO" id="GO:0004818">
    <property type="term" value="F:glutamate-tRNA ligase activity"/>
    <property type="evidence" value="ECO:0007669"/>
    <property type="project" value="UniProtKB-UniRule"/>
</dbReference>
<dbReference type="GO" id="GO:0000049">
    <property type="term" value="F:tRNA binding"/>
    <property type="evidence" value="ECO:0007669"/>
    <property type="project" value="InterPro"/>
</dbReference>
<dbReference type="GO" id="GO:0008270">
    <property type="term" value="F:zinc ion binding"/>
    <property type="evidence" value="ECO:0007669"/>
    <property type="project" value="InterPro"/>
</dbReference>
<dbReference type="GO" id="GO:0006424">
    <property type="term" value="P:glutamyl-tRNA aminoacylation"/>
    <property type="evidence" value="ECO:0007669"/>
    <property type="project" value="UniProtKB-UniRule"/>
</dbReference>
<dbReference type="CDD" id="cd00808">
    <property type="entry name" value="GluRS_core"/>
    <property type="match status" value="1"/>
</dbReference>
<dbReference type="FunFam" id="3.40.50.620:FF:000007">
    <property type="entry name" value="Glutamate--tRNA ligase"/>
    <property type="match status" value="1"/>
</dbReference>
<dbReference type="Gene3D" id="1.10.10.350">
    <property type="match status" value="1"/>
</dbReference>
<dbReference type="Gene3D" id="3.40.50.620">
    <property type="entry name" value="HUPs"/>
    <property type="match status" value="1"/>
</dbReference>
<dbReference type="HAMAP" id="MF_00022">
    <property type="entry name" value="Glu_tRNA_synth_type1"/>
    <property type="match status" value="1"/>
</dbReference>
<dbReference type="InterPro" id="IPR045462">
    <property type="entry name" value="aa-tRNA-synth_I_cd-bd"/>
</dbReference>
<dbReference type="InterPro" id="IPR020751">
    <property type="entry name" value="aa-tRNA-synth_I_codon-bd_sub2"/>
</dbReference>
<dbReference type="InterPro" id="IPR001412">
    <property type="entry name" value="aa-tRNA-synth_I_CS"/>
</dbReference>
<dbReference type="InterPro" id="IPR008925">
    <property type="entry name" value="aa_tRNA-synth_I_cd-bd_sf"/>
</dbReference>
<dbReference type="InterPro" id="IPR004527">
    <property type="entry name" value="Glu-tRNA-ligase_bac/mito"/>
</dbReference>
<dbReference type="InterPro" id="IPR000924">
    <property type="entry name" value="Glu/Gln-tRNA-synth"/>
</dbReference>
<dbReference type="InterPro" id="IPR020058">
    <property type="entry name" value="Glu/Gln-tRNA-synth_Ib_cat-dom"/>
</dbReference>
<dbReference type="InterPro" id="IPR049940">
    <property type="entry name" value="GluQ/Sye"/>
</dbReference>
<dbReference type="InterPro" id="IPR033910">
    <property type="entry name" value="GluRS_core"/>
</dbReference>
<dbReference type="InterPro" id="IPR014729">
    <property type="entry name" value="Rossmann-like_a/b/a_fold"/>
</dbReference>
<dbReference type="NCBIfam" id="TIGR00464">
    <property type="entry name" value="gltX_bact"/>
    <property type="match status" value="1"/>
</dbReference>
<dbReference type="PANTHER" id="PTHR43311">
    <property type="entry name" value="GLUTAMATE--TRNA LIGASE"/>
    <property type="match status" value="1"/>
</dbReference>
<dbReference type="PANTHER" id="PTHR43311:SF2">
    <property type="entry name" value="GLUTAMATE--TRNA LIGASE, MITOCHONDRIAL-RELATED"/>
    <property type="match status" value="1"/>
</dbReference>
<dbReference type="Pfam" id="PF19269">
    <property type="entry name" value="Anticodon_2"/>
    <property type="match status" value="1"/>
</dbReference>
<dbReference type="Pfam" id="PF00749">
    <property type="entry name" value="tRNA-synt_1c"/>
    <property type="match status" value="1"/>
</dbReference>
<dbReference type="PRINTS" id="PR00987">
    <property type="entry name" value="TRNASYNTHGLU"/>
</dbReference>
<dbReference type="SUPFAM" id="SSF48163">
    <property type="entry name" value="An anticodon-binding domain of class I aminoacyl-tRNA synthetases"/>
    <property type="match status" value="1"/>
</dbReference>
<dbReference type="SUPFAM" id="SSF52374">
    <property type="entry name" value="Nucleotidylyl transferase"/>
    <property type="match status" value="1"/>
</dbReference>
<dbReference type="PROSITE" id="PS00178">
    <property type="entry name" value="AA_TRNA_LIGASE_I"/>
    <property type="match status" value="1"/>
</dbReference>